<comment type="function">
    <text evidence="2">Involved in the naphthalene upper catabolic pathway. Catalyzes the transformation of trans-O-hydroxybenzylidenepyruvate (THBPA) to salicylaldehyde and pyruvate. The reaction is reversible (Probable).</text>
</comment>
<comment type="catalytic activity">
    <reaction>
        <text>(3E)-4-(2-hydroxyphenyl)-2-oxobut-3-enoate + H2O = salicylaldehyde + pyruvate</text>
        <dbReference type="Rhea" id="RHEA:27389"/>
        <dbReference type="ChEBI" id="CHEBI:15361"/>
        <dbReference type="ChEBI" id="CHEBI:15377"/>
        <dbReference type="ChEBI" id="CHEBI:16008"/>
        <dbReference type="ChEBI" id="CHEBI:59353"/>
        <dbReference type="EC" id="4.1.2.45"/>
    </reaction>
</comment>
<comment type="pathway">
    <text>Aromatic compound metabolism; naphthalene degradation.</text>
</comment>
<comment type="miscellaneous">
    <text evidence="2">Encoded on an unnamed 75 kb plasmid.</text>
</comment>
<comment type="similarity">
    <text evidence="1">Belongs to the DapA family.</text>
</comment>
<keyword id="KW-0058">Aromatic hydrocarbons catabolism</keyword>
<keyword id="KW-0456">Lyase</keyword>
<keyword id="KW-0614">Plasmid</keyword>
<keyword id="KW-0670">Pyruvate</keyword>
<geneLocation type="plasmid">
    <name>unnamed</name>
</geneLocation>
<feature type="chain" id="PRO_0000096705" description="Trans-O-hydroxybenzylidenepyruvate hydratase-aldolase">
    <location>
        <begin position="1"/>
        <end position="334"/>
    </location>
</feature>
<gene>
    <name type="primary">doxI</name>
</gene>
<protein>
    <recommendedName>
        <fullName>Trans-O-hydroxybenzylidenepyruvate hydratase-aldolase</fullName>
        <shortName>THBPA hydratase-aldolase</shortName>
        <ecNumber>4.1.2.45</ecNumber>
    </recommendedName>
    <alternativeName>
        <fullName>2'-hydroxybenzalpyruvate aldolase</fullName>
    </alternativeName>
</protein>
<proteinExistence type="inferred from homology"/>
<reference key="1">
    <citation type="journal article" date="1993" name="J. Bacteriol.">
        <title>Metabolism of dibenzothiophene and naphthalene in Pseudomonas strains: complete DNA sequence of an upper naphthalene catabolic pathway.</title>
        <authorList>
            <person name="Denome S.A."/>
            <person name="Stanley D.C."/>
            <person name="Olson E.S."/>
            <person name="Young K.D."/>
        </authorList>
    </citation>
    <scope>NUCLEOTIDE SEQUENCE [GENOMIC DNA]</scope>
    <scope>FUNCTION</scope>
    <source>
        <strain>C18</strain>
        <plasmid>unnamed</plasmid>
    </source>
</reference>
<accession>P0A143</accession>
<accession>Q57444</accession>
<dbReference type="EC" id="4.1.2.45"/>
<dbReference type="EMBL" id="M60405">
    <property type="protein sequence ID" value="AAA16132.1"/>
    <property type="molecule type" value="Genomic_DNA"/>
</dbReference>
<dbReference type="SMR" id="P0A143"/>
<dbReference type="UniPathway" id="UPA00082"/>
<dbReference type="GO" id="GO:0008840">
    <property type="term" value="F:4-hydroxy-tetrahydrodipicolinate synthase activity"/>
    <property type="evidence" value="ECO:0007669"/>
    <property type="project" value="TreeGrafter"/>
</dbReference>
<dbReference type="GO" id="GO:0018813">
    <property type="term" value="F:trans-o-hydroxybenzylidenepyruvate hydratase-aldolase activity"/>
    <property type="evidence" value="ECO:0007669"/>
    <property type="project" value="UniProtKB-EC"/>
</dbReference>
<dbReference type="GO" id="GO:0009056">
    <property type="term" value="P:catabolic process"/>
    <property type="evidence" value="ECO:0007669"/>
    <property type="project" value="UniProtKB-KW"/>
</dbReference>
<dbReference type="CDD" id="cd00952">
    <property type="entry name" value="CHBPH_aldolase"/>
    <property type="match status" value="1"/>
</dbReference>
<dbReference type="FunFam" id="3.20.20.70:FF:000190">
    <property type="entry name" value="Trans-o-hydroxybenzylidenepyruvate hydratase-aldolase"/>
    <property type="match status" value="1"/>
</dbReference>
<dbReference type="Gene3D" id="3.20.20.70">
    <property type="entry name" value="Aldolase class I"/>
    <property type="match status" value="1"/>
</dbReference>
<dbReference type="InterPro" id="IPR013785">
    <property type="entry name" value="Aldolase_TIM"/>
</dbReference>
<dbReference type="InterPro" id="IPR002220">
    <property type="entry name" value="DapA-like"/>
</dbReference>
<dbReference type="InterPro" id="IPR048038">
    <property type="entry name" value="HBPHA/CBPHA"/>
</dbReference>
<dbReference type="PANTHER" id="PTHR12128:SF66">
    <property type="entry name" value="4-HYDROXY-2-OXOGLUTARATE ALDOLASE, MITOCHONDRIAL"/>
    <property type="match status" value="1"/>
</dbReference>
<dbReference type="PANTHER" id="PTHR12128">
    <property type="entry name" value="DIHYDRODIPICOLINATE SYNTHASE"/>
    <property type="match status" value="1"/>
</dbReference>
<dbReference type="Pfam" id="PF00701">
    <property type="entry name" value="DHDPS"/>
    <property type="match status" value="1"/>
</dbReference>
<dbReference type="PIRSF" id="PIRSF001365">
    <property type="entry name" value="DHDPS"/>
    <property type="match status" value="1"/>
</dbReference>
<dbReference type="PRINTS" id="PR00146">
    <property type="entry name" value="DHPICSNTHASE"/>
</dbReference>
<dbReference type="SMART" id="SM01130">
    <property type="entry name" value="DHDPS"/>
    <property type="match status" value="1"/>
</dbReference>
<dbReference type="SUPFAM" id="SSF51569">
    <property type="entry name" value="Aldolase"/>
    <property type="match status" value="1"/>
</dbReference>
<organism>
    <name type="scientific">Pseudomonas sp. (strain C18)</name>
    <dbReference type="NCBI Taxonomy" id="69011"/>
    <lineage>
        <taxon>Bacteria</taxon>
        <taxon>Pseudomonadati</taxon>
        <taxon>Pseudomonadota</taxon>
    </lineage>
</organism>
<evidence type="ECO:0000305" key="1"/>
<evidence type="ECO:0000305" key="2">
    <source>
    </source>
</evidence>
<sequence length="334" mass="36942">MSNKIMKTSRLTAEDINGAWTIMPTPSTPDASDWRSTATVDLEETARIVEELIAAGVNGILSMGTFGECATLTWDEKRDYVSTIVETIRGRVPYFCGTTALNTREVIRQTRELIDIGANGTMLGVPMWVKMDLPTAVQFYRDVADAVPEAAIAIYANPEAFKFDFPRPFWAEMSKIPQVVTAKYLGIGMLDLDLRLAPNIRFLPHEDDYYAAARINPERITAFWSSGAMCGPATAIMLRDEVVRAKSTGDWAKAKAISDDMRAADSTLFPRGDFSEFSKYNIGLEKARMDAAGWLKAGPCRPPYNLVPEDYLAGAQKSGKAWAALHAKYSNELK</sequence>
<name>NAHE_PSEU8</name>